<gene>
    <name evidence="1" type="primary">proA</name>
    <name type="ordered locus">mll4009</name>
</gene>
<name>PROA_RHILO</name>
<reference key="1">
    <citation type="journal article" date="2000" name="DNA Res.">
        <title>Complete genome structure of the nitrogen-fixing symbiotic bacterium Mesorhizobium loti.</title>
        <authorList>
            <person name="Kaneko T."/>
            <person name="Nakamura Y."/>
            <person name="Sato S."/>
            <person name="Asamizu E."/>
            <person name="Kato T."/>
            <person name="Sasamoto S."/>
            <person name="Watanabe A."/>
            <person name="Idesawa K."/>
            <person name="Ishikawa A."/>
            <person name="Kawashima K."/>
            <person name="Kimura T."/>
            <person name="Kishida Y."/>
            <person name="Kiyokawa C."/>
            <person name="Kohara M."/>
            <person name="Matsumoto M."/>
            <person name="Matsuno A."/>
            <person name="Mochizuki Y."/>
            <person name="Nakayama S."/>
            <person name="Nakazaki N."/>
            <person name="Shimpo S."/>
            <person name="Sugimoto M."/>
            <person name="Takeuchi C."/>
            <person name="Yamada M."/>
            <person name="Tabata S."/>
        </authorList>
    </citation>
    <scope>NUCLEOTIDE SEQUENCE [LARGE SCALE GENOMIC DNA]</scope>
    <source>
        <strain>LMG 29417 / CECT 9101 / MAFF 303099</strain>
    </source>
</reference>
<evidence type="ECO:0000255" key="1">
    <source>
        <dbReference type="HAMAP-Rule" id="MF_00412"/>
    </source>
</evidence>
<dbReference type="EC" id="1.2.1.41" evidence="1"/>
<dbReference type="EMBL" id="BA000012">
    <property type="protein sequence ID" value="BAB50772.1"/>
    <property type="molecule type" value="Genomic_DNA"/>
</dbReference>
<dbReference type="RefSeq" id="WP_010912115.1">
    <property type="nucleotide sequence ID" value="NC_002678.2"/>
</dbReference>
<dbReference type="SMR" id="Q98EZ5"/>
<dbReference type="KEGG" id="mlo:mll4009"/>
<dbReference type="PATRIC" id="fig|266835.9.peg.3183"/>
<dbReference type="eggNOG" id="COG0014">
    <property type="taxonomic scope" value="Bacteria"/>
</dbReference>
<dbReference type="HOGENOM" id="CLU_030231_0_0_5"/>
<dbReference type="UniPathway" id="UPA00098">
    <property type="reaction ID" value="UER00360"/>
</dbReference>
<dbReference type="Proteomes" id="UP000000552">
    <property type="component" value="Chromosome"/>
</dbReference>
<dbReference type="GO" id="GO:0005737">
    <property type="term" value="C:cytoplasm"/>
    <property type="evidence" value="ECO:0007669"/>
    <property type="project" value="UniProtKB-SubCell"/>
</dbReference>
<dbReference type="GO" id="GO:0004350">
    <property type="term" value="F:glutamate-5-semialdehyde dehydrogenase activity"/>
    <property type="evidence" value="ECO:0007669"/>
    <property type="project" value="UniProtKB-UniRule"/>
</dbReference>
<dbReference type="GO" id="GO:0050661">
    <property type="term" value="F:NADP binding"/>
    <property type="evidence" value="ECO:0007669"/>
    <property type="project" value="InterPro"/>
</dbReference>
<dbReference type="GO" id="GO:0055129">
    <property type="term" value="P:L-proline biosynthetic process"/>
    <property type="evidence" value="ECO:0007669"/>
    <property type="project" value="UniProtKB-UniRule"/>
</dbReference>
<dbReference type="CDD" id="cd07079">
    <property type="entry name" value="ALDH_F18-19_ProA-GPR"/>
    <property type="match status" value="1"/>
</dbReference>
<dbReference type="FunFam" id="3.40.309.10:FF:000006">
    <property type="entry name" value="Gamma-glutamyl phosphate reductase"/>
    <property type="match status" value="1"/>
</dbReference>
<dbReference type="Gene3D" id="3.40.605.10">
    <property type="entry name" value="Aldehyde Dehydrogenase, Chain A, domain 1"/>
    <property type="match status" value="1"/>
</dbReference>
<dbReference type="Gene3D" id="3.40.309.10">
    <property type="entry name" value="Aldehyde Dehydrogenase, Chain A, domain 2"/>
    <property type="match status" value="1"/>
</dbReference>
<dbReference type="HAMAP" id="MF_00412">
    <property type="entry name" value="ProA"/>
    <property type="match status" value="1"/>
</dbReference>
<dbReference type="InterPro" id="IPR016161">
    <property type="entry name" value="Ald_DH/histidinol_DH"/>
</dbReference>
<dbReference type="InterPro" id="IPR016163">
    <property type="entry name" value="Ald_DH_C"/>
</dbReference>
<dbReference type="InterPro" id="IPR016162">
    <property type="entry name" value="Ald_DH_N"/>
</dbReference>
<dbReference type="InterPro" id="IPR015590">
    <property type="entry name" value="Aldehyde_DH_dom"/>
</dbReference>
<dbReference type="InterPro" id="IPR020593">
    <property type="entry name" value="G-glutamylP_reductase_CS"/>
</dbReference>
<dbReference type="InterPro" id="IPR012134">
    <property type="entry name" value="Glu-5-SA_DH"/>
</dbReference>
<dbReference type="InterPro" id="IPR000965">
    <property type="entry name" value="GPR_dom"/>
</dbReference>
<dbReference type="NCBIfam" id="NF001221">
    <property type="entry name" value="PRK00197.1"/>
    <property type="match status" value="1"/>
</dbReference>
<dbReference type="NCBIfam" id="TIGR00407">
    <property type="entry name" value="proA"/>
    <property type="match status" value="1"/>
</dbReference>
<dbReference type="PANTHER" id="PTHR11063:SF8">
    <property type="entry name" value="DELTA-1-PYRROLINE-5-CARBOXYLATE SYNTHASE"/>
    <property type="match status" value="1"/>
</dbReference>
<dbReference type="PANTHER" id="PTHR11063">
    <property type="entry name" value="GLUTAMATE SEMIALDEHYDE DEHYDROGENASE"/>
    <property type="match status" value="1"/>
</dbReference>
<dbReference type="Pfam" id="PF00171">
    <property type="entry name" value="Aldedh"/>
    <property type="match status" value="1"/>
</dbReference>
<dbReference type="PIRSF" id="PIRSF000151">
    <property type="entry name" value="GPR"/>
    <property type="match status" value="1"/>
</dbReference>
<dbReference type="SUPFAM" id="SSF53720">
    <property type="entry name" value="ALDH-like"/>
    <property type="match status" value="1"/>
</dbReference>
<dbReference type="PROSITE" id="PS01223">
    <property type="entry name" value="PROA"/>
    <property type="match status" value="1"/>
</dbReference>
<feature type="chain" id="PRO_0000189771" description="Gamma-glutamyl phosphate reductase">
    <location>
        <begin position="1"/>
        <end position="428"/>
    </location>
</feature>
<protein>
    <recommendedName>
        <fullName evidence="1">Gamma-glutamyl phosphate reductase</fullName>
        <shortName evidence="1">GPR</shortName>
        <ecNumber evidence="1">1.2.1.41</ecNumber>
    </recommendedName>
    <alternativeName>
        <fullName evidence="1">Glutamate-5-semialdehyde dehydrogenase</fullName>
    </alternativeName>
    <alternativeName>
        <fullName evidence="1">Glutamyl-gamma-semialdehyde dehydrogenase</fullName>
        <shortName evidence="1">GSA dehydrogenase</shortName>
    </alternativeName>
</protein>
<comment type="function">
    <text evidence="1">Catalyzes the NADPH-dependent reduction of L-glutamate 5-phosphate into L-glutamate 5-semialdehyde and phosphate. The product spontaneously undergoes cyclization to form 1-pyrroline-5-carboxylate.</text>
</comment>
<comment type="catalytic activity">
    <reaction evidence="1">
        <text>L-glutamate 5-semialdehyde + phosphate + NADP(+) = L-glutamyl 5-phosphate + NADPH + H(+)</text>
        <dbReference type="Rhea" id="RHEA:19541"/>
        <dbReference type="ChEBI" id="CHEBI:15378"/>
        <dbReference type="ChEBI" id="CHEBI:43474"/>
        <dbReference type="ChEBI" id="CHEBI:57783"/>
        <dbReference type="ChEBI" id="CHEBI:58066"/>
        <dbReference type="ChEBI" id="CHEBI:58274"/>
        <dbReference type="ChEBI" id="CHEBI:58349"/>
        <dbReference type="EC" id="1.2.1.41"/>
    </reaction>
</comment>
<comment type="pathway">
    <text evidence="1">Amino-acid biosynthesis; L-proline biosynthesis; L-glutamate 5-semialdehyde from L-glutamate: step 2/2.</text>
</comment>
<comment type="subcellular location">
    <subcellularLocation>
        <location evidence="1">Cytoplasm</location>
    </subcellularLocation>
</comment>
<comment type="similarity">
    <text evidence="1">Belongs to the gamma-glutamyl phosphate reductase family.</text>
</comment>
<sequence>MLKLHEKSGDDTVALMADIGRRARAAARPLAIAPTAAKNAALLAMADAIVARQQDILDANAIDVSNGEEAGLSASFMDRLKLTPARIRAMADGIREIAELKDPVGDVIAAWERPNGLRIERVRTPLGVVGVIYESRPNVTADAGALCLKAGNPVILRGGSDSLNSSAAIHACLVEGLKAAGLPEDAIQLVPTTDRAAVGEMLKGLGGALDVIIPRGGKSLVGRVQSEARVPVFAHLEGICHLYIDRSADLDMAVKIAVNAKMRRTGVCGAAETLLVDRAVASTHLVPILDALRAAGCEIHADQEVLKVFFDAKPATDADWVTEYLDAIIAVKLVDGIGGAIEHIETFSSHHTEAIIAEDPKAVERFFNEIDSAILLHNASTQFADGGEFGMGAEIGIATGKMHARGPVGVEQLTSFKYRVRGSGQVRP</sequence>
<organism>
    <name type="scientific">Mesorhizobium japonicum (strain LMG 29417 / CECT 9101 / MAFF 303099)</name>
    <name type="common">Mesorhizobium loti (strain MAFF 303099)</name>
    <dbReference type="NCBI Taxonomy" id="266835"/>
    <lineage>
        <taxon>Bacteria</taxon>
        <taxon>Pseudomonadati</taxon>
        <taxon>Pseudomonadota</taxon>
        <taxon>Alphaproteobacteria</taxon>
        <taxon>Hyphomicrobiales</taxon>
        <taxon>Phyllobacteriaceae</taxon>
        <taxon>Mesorhizobium</taxon>
    </lineage>
</organism>
<keyword id="KW-0028">Amino-acid biosynthesis</keyword>
<keyword id="KW-0963">Cytoplasm</keyword>
<keyword id="KW-0521">NADP</keyword>
<keyword id="KW-0560">Oxidoreductase</keyword>
<keyword id="KW-0641">Proline biosynthesis</keyword>
<accession>Q98EZ5</accession>
<proteinExistence type="inferred from homology"/>